<proteinExistence type="inferred from homology"/>
<feature type="chain" id="PRO_0000388878" description="UPF0756 membrane protein GWCH70_2680">
    <location>
        <begin position="1"/>
        <end position="151"/>
    </location>
</feature>
<feature type="transmembrane region" description="Helical" evidence="1">
    <location>
        <begin position="5"/>
        <end position="25"/>
    </location>
</feature>
<feature type="transmembrane region" description="Helical" evidence="1">
    <location>
        <begin position="53"/>
        <end position="73"/>
    </location>
</feature>
<feature type="transmembrane region" description="Helical" evidence="1">
    <location>
        <begin position="86"/>
        <end position="106"/>
    </location>
</feature>
<feature type="transmembrane region" description="Helical" evidence="1">
    <location>
        <begin position="116"/>
        <end position="136"/>
    </location>
</feature>
<sequence>MGEPILFLLILFIIGFIAKNQSLMIAVAILLIIKMVGMGEKWLPIVHEKGIHWGVTVITIAVLAPIATGEIGFRQLIASLQSLSAWIALLSGIFVALVAKGGVTLLATDPHMTAALVFGTIIAVSLFHGVAVGPLIGAGIAYMVMKVIEYF</sequence>
<reference key="1">
    <citation type="submission" date="2009-06" db="EMBL/GenBank/DDBJ databases">
        <title>Complete sequence of chromosome of Geopacillus sp. WCH70.</title>
        <authorList>
            <consortium name="US DOE Joint Genome Institute"/>
            <person name="Lucas S."/>
            <person name="Copeland A."/>
            <person name="Lapidus A."/>
            <person name="Glavina del Rio T."/>
            <person name="Dalin E."/>
            <person name="Tice H."/>
            <person name="Bruce D."/>
            <person name="Goodwin L."/>
            <person name="Pitluck S."/>
            <person name="Chertkov O."/>
            <person name="Brettin T."/>
            <person name="Detter J.C."/>
            <person name="Han C."/>
            <person name="Larimer F."/>
            <person name="Land M."/>
            <person name="Hauser L."/>
            <person name="Kyrpides N."/>
            <person name="Mikhailova N."/>
            <person name="Brumm P."/>
            <person name="Mead D.A."/>
            <person name="Richardson P."/>
        </authorList>
    </citation>
    <scope>NUCLEOTIDE SEQUENCE [LARGE SCALE GENOMIC DNA]</scope>
    <source>
        <strain>WCH70</strain>
    </source>
</reference>
<protein>
    <recommendedName>
        <fullName evidence="1">UPF0756 membrane protein GWCH70_2680</fullName>
    </recommendedName>
</protein>
<evidence type="ECO:0000255" key="1">
    <source>
        <dbReference type="HAMAP-Rule" id="MF_01874"/>
    </source>
</evidence>
<organism>
    <name type="scientific">Geobacillus sp. (strain WCH70)</name>
    <dbReference type="NCBI Taxonomy" id="471223"/>
    <lineage>
        <taxon>Bacteria</taxon>
        <taxon>Bacillati</taxon>
        <taxon>Bacillota</taxon>
        <taxon>Bacilli</taxon>
        <taxon>Bacillales</taxon>
        <taxon>Anoxybacillaceae</taxon>
        <taxon>Geobacillus</taxon>
    </lineage>
</organism>
<accession>C5D657</accession>
<comment type="subcellular location">
    <subcellularLocation>
        <location evidence="1">Cell membrane</location>
        <topology evidence="1">Multi-pass membrane protein</topology>
    </subcellularLocation>
</comment>
<comment type="similarity">
    <text evidence="1">Belongs to the UPF0756 family.</text>
</comment>
<dbReference type="EMBL" id="CP001638">
    <property type="protein sequence ID" value="ACS25373.1"/>
    <property type="molecule type" value="Genomic_DNA"/>
</dbReference>
<dbReference type="STRING" id="471223.GWCH70_2680"/>
<dbReference type="KEGG" id="gwc:GWCH70_2680"/>
<dbReference type="eggNOG" id="COG2707">
    <property type="taxonomic scope" value="Bacteria"/>
</dbReference>
<dbReference type="HOGENOM" id="CLU_125889_1_0_9"/>
<dbReference type="OrthoDB" id="80306at2"/>
<dbReference type="GO" id="GO:0005886">
    <property type="term" value="C:plasma membrane"/>
    <property type="evidence" value="ECO:0007669"/>
    <property type="project" value="UniProtKB-SubCell"/>
</dbReference>
<dbReference type="HAMAP" id="MF_01874">
    <property type="entry name" value="UPF0756"/>
    <property type="match status" value="1"/>
</dbReference>
<dbReference type="InterPro" id="IPR007382">
    <property type="entry name" value="UPF0756_TM"/>
</dbReference>
<dbReference type="PANTHER" id="PTHR38452">
    <property type="entry name" value="UPF0756 MEMBRANE PROTEIN YEAL"/>
    <property type="match status" value="1"/>
</dbReference>
<dbReference type="PANTHER" id="PTHR38452:SF1">
    <property type="entry name" value="UPF0756 MEMBRANE PROTEIN YEAL"/>
    <property type="match status" value="1"/>
</dbReference>
<dbReference type="Pfam" id="PF04284">
    <property type="entry name" value="DUF441"/>
    <property type="match status" value="1"/>
</dbReference>
<name>Y2680_GEOSW</name>
<gene>
    <name type="ordered locus">GWCH70_2680</name>
</gene>
<keyword id="KW-1003">Cell membrane</keyword>
<keyword id="KW-0472">Membrane</keyword>
<keyword id="KW-0812">Transmembrane</keyword>
<keyword id="KW-1133">Transmembrane helix</keyword>